<comment type="function">
    <text evidence="1">Aspartyl-tRNA synthetase with relaxed tRNA specificity since it is able to aspartylate not only its cognate tRNA(Asp) but also tRNA(Asn). Reaction proceeds in two steps: L-aspartate is first activated by ATP to form Asp-AMP and then transferred to the acceptor end of tRNA(Asp/Asn).</text>
</comment>
<comment type="catalytic activity">
    <reaction evidence="1">
        <text>tRNA(Asx) + L-aspartate + ATP = L-aspartyl-tRNA(Asx) + AMP + diphosphate</text>
        <dbReference type="Rhea" id="RHEA:18349"/>
        <dbReference type="Rhea" id="RHEA-COMP:9710"/>
        <dbReference type="Rhea" id="RHEA-COMP:9711"/>
        <dbReference type="ChEBI" id="CHEBI:29991"/>
        <dbReference type="ChEBI" id="CHEBI:30616"/>
        <dbReference type="ChEBI" id="CHEBI:33019"/>
        <dbReference type="ChEBI" id="CHEBI:78442"/>
        <dbReference type="ChEBI" id="CHEBI:78516"/>
        <dbReference type="ChEBI" id="CHEBI:456215"/>
        <dbReference type="EC" id="6.1.1.23"/>
    </reaction>
</comment>
<comment type="subunit">
    <text evidence="1">Homodimer.</text>
</comment>
<comment type="subcellular location">
    <subcellularLocation>
        <location evidence="1">Cytoplasm</location>
    </subcellularLocation>
</comment>
<comment type="similarity">
    <text evidence="1">Belongs to the class-II aminoacyl-tRNA synthetase family. Type 1 subfamily.</text>
</comment>
<evidence type="ECO:0000255" key="1">
    <source>
        <dbReference type="HAMAP-Rule" id="MF_00044"/>
    </source>
</evidence>
<reference key="1">
    <citation type="journal article" date="2009" name="PLoS ONE">
        <title>Genome degradation in Brucella ovis corresponds with narrowing of its host range and tissue tropism.</title>
        <authorList>
            <person name="Tsolis R.M."/>
            <person name="Seshadri R."/>
            <person name="Santos R.L."/>
            <person name="Sangari F.J."/>
            <person name="Lobo J.M."/>
            <person name="de Jong M.F."/>
            <person name="Ren Q."/>
            <person name="Myers G."/>
            <person name="Brinkac L.M."/>
            <person name="Nelson W.C."/>
            <person name="Deboy R.T."/>
            <person name="Angiuoli S."/>
            <person name="Khouri H."/>
            <person name="Dimitrov G."/>
            <person name="Robinson J.R."/>
            <person name="Mulligan S."/>
            <person name="Walker R.L."/>
            <person name="Elzer P.E."/>
            <person name="Hassan K.A."/>
            <person name="Paulsen I.T."/>
        </authorList>
    </citation>
    <scope>NUCLEOTIDE SEQUENCE [LARGE SCALE GENOMIC DNA]</scope>
    <source>
        <strain>ATCC 25840 / 63/290 / NCTC 10512</strain>
    </source>
</reference>
<accession>A5VPT5</accession>
<proteinExistence type="inferred from homology"/>
<name>SYDND_BRUO2</name>
<gene>
    <name evidence="1" type="primary">aspS</name>
    <name type="ordered locus">BOV_0745</name>
</gene>
<protein>
    <recommendedName>
        <fullName evidence="1">Aspartate--tRNA(Asp/Asn) ligase</fullName>
        <ecNumber evidence="1">6.1.1.23</ecNumber>
    </recommendedName>
    <alternativeName>
        <fullName evidence="1">Aspartyl-tRNA synthetase</fullName>
        <shortName evidence="1">AspRS</shortName>
    </alternativeName>
    <alternativeName>
        <fullName evidence="1">Non-discriminating aspartyl-tRNA synthetase</fullName>
        <shortName evidence="1">ND-AspRS</shortName>
    </alternativeName>
</protein>
<sequence length="595" mass="67273">MHRYRSHTCAALRKTDVGSNVRLSGWVHRVRDHGGILFIDLRDHYGITQIVADPDSPAFKVAETVRGEWVIRVDGEVKARADDAVNTNLPTGEVEIFATEIEVLSPAKELPLPVFGEPDYPEDIRLKYRFLDLRRETLHKNIMSRTKIIAAMRRRMTEIGFNEFSTPILTASSPEGARDFLVPSRIHPGKFYALPQAPQQYKQLLMVAGFDRYFQIAPCFRDEDPRADRLPGEFYQLDLEMSFVTQEEVWETMEPVMRGIFEEFAEGKPVTKVFRRIAYDDAIRTYGSDKPDLRNPIEMQAVTDHFAGSGFKVFANMIANDAKVEVWAIPAKTGGSRAFCDRMNSWAQSEGQPGLGYIFWRKEGDKLEGAGPIAKNIGEERTEAIRKQMGLEDGDACFFVAGLPSKFYKFAGDARTRAGEELNLVDRDRFELAWIIDFPFYEWDEDNKKIDFAHNPFSMPQGGMDALENMDPLEIKAYQYDLVCNGFEIASGSIRNQLPEVMVKAFEKVGLSQQDVEERFGGLYRAFQYGAPPHGGMAAGIDRVIMLLVGAKNLREISLFPMNQQALDLLMGAPSEVSPAQLRDLHVRLAPVQKS</sequence>
<dbReference type="EC" id="6.1.1.23" evidence="1"/>
<dbReference type="EMBL" id="CP000708">
    <property type="protein sequence ID" value="ABQ61501.1"/>
    <property type="molecule type" value="Genomic_DNA"/>
</dbReference>
<dbReference type="RefSeq" id="WP_004683546.1">
    <property type="nucleotide sequence ID" value="NC_009505.1"/>
</dbReference>
<dbReference type="SMR" id="A5VPT5"/>
<dbReference type="GeneID" id="97533935"/>
<dbReference type="KEGG" id="bov:BOV_0745"/>
<dbReference type="HOGENOM" id="CLU_014330_3_2_5"/>
<dbReference type="PhylomeDB" id="A5VPT5"/>
<dbReference type="Proteomes" id="UP000006383">
    <property type="component" value="Chromosome I"/>
</dbReference>
<dbReference type="GO" id="GO:0005737">
    <property type="term" value="C:cytoplasm"/>
    <property type="evidence" value="ECO:0007669"/>
    <property type="project" value="UniProtKB-SubCell"/>
</dbReference>
<dbReference type="GO" id="GO:0004815">
    <property type="term" value="F:aspartate-tRNA ligase activity"/>
    <property type="evidence" value="ECO:0007669"/>
    <property type="project" value="UniProtKB-UniRule"/>
</dbReference>
<dbReference type="GO" id="GO:0050560">
    <property type="term" value="F:aspartate-tRNA(Asn) ligase activity"/>
    <property type="evidence" value="ECO:0007669"/>
    <property type="project" value="UniProtKB-EC"/>
</dbReference>
<dbReference type="GO" id="GO:0005524">
    <property type="term" value="F:ATP binding"/>
    <property type="evidence" value="ECO:0007669"/>
    <property type="project" value="UniProtKB-UniRule"/>
</dbReference>
<dbReference type="GO" id="GO:0003676">
    <property type="term" value="F:nucleic acid binding"/>
    <property type="evidence" value="ECO:0007669"/>
    <property type="project" value="InterPro"/>
</dbReference>
<dbReference type="GO" id="GO:0006422">
    <property type="term" value="P:aspartyl-tRNA aminoacylation"/>
    <property type="evidence" value="ECO:0007669"/>
    <property type="project" value="UniProtKB-UniRule"/>
</dbReference>
<dbReference type="CDD" id="cd00777">
    <property type="entry name" value="AspRS_core"/>
    <property type="match status" value="1"/>
</dbReference>
<dbReference type="CDD" id="cd04317">
    <property type="entry name" value="EcAspRS_like_N"/>
    <property type="match status" value="1"/>
</dbReference>
<dbReference type="Gene3D" id="3.30.930.10">
    <property type="entry name" value="Bira Bifunctional Protein, Domain 2"/>
    <property type="match status" value="1"/>
</dbReference>
<dbReference type="Gene3D" id="3.30.1360.30">
    <property type="entry name" value="GAD-like domain"/>
    <property type="match status" value="1"/>
</dbReference>
<dbReference type="Gene3D" id="2.40.50.140">
    <property type="entry name" value="Nucleic acid-binding proteins"/>
    <property type="match status" value="1"/>
</dbReference>
<dbReference type="HAMAP" id="MF_00044">
    <property type="entry name" value="Asp_tRNA_synth_type1"/>
    <property type="match status" value="1"/>
</dbReference>
<dbReference type="InterPro" id="IPR004364">
    <property type="entry name" value="Aa-tRNA-synt_II"/>
</dbReference>
<dbReference type="InterPro" id="IPR006195">
    <property type="entry name" value="aa-tRNA-synth_II"/>
</dbReference>
<dbReference type="InterPro" id="IPR045864">
    <property type="entry name" value="aa-tRNA-synth_II/BPL/LPL"/>
</dbReference>
<dbReference type="InterPro" id="IPR004524">
    <property type="entry name" value="Asp-tRNA-ligase_1"/>
</dbReference>
<dbReference type="InterPro" id="IPR047089">
    <property type="entry name" value="Asp-tRNA-ligase_1_N"/>
</dbReference>
<dbReference type="InterPro" id="IPR002312">
    <property type="entry name" value="Asp/Asn-tRNA-synth_IIb"/>
</dbReference>
<dbReference type="InterPro" id="IPR047090">
    <property type="entry name" value="AspRS_core"/>
</dbReference>
<dbReference type="InterPro" id="IPR004115">
    <property type="entry name" value="GAD-like_sf"/>
</dbReference>
<dbReference type="InterPro" id="IPR029351">
    <property type="entry name" value="GAD_dom"/>
</dbReference>
<dbReference type="InterPro" id="IPR012340">
    <property type="entry name" value="NA-bd_OB-fold"/>
</dbReference>
<dbReference type="InterPro" id="IPR004365">
    <property type="entry name" value="NA-bd_OB_tRNA"/>
</dbReference>
<dbReference type="NCBIfam" id="TIGR00459">
    <property type="entry name" value="aspS_bact"/>
    <property type="match status" value="1"/>
</dbReference>
<dbReference type="NCBIfam" id="NF001750">
    <property type="entry name" value="PRK00476.1"/>
    <property type="match status" value="1"/>
</dbReference>
<dbReference type="PANTHER" id="PTHR22594:SF5">
    <property type="entry name" value="ASPARTATE--TRNA LIGASE, MITOCHONDRIAL"/>
    <property type="match status" value="1"/>
</dbReference>
<dbReference type="PANTHER" id="PTHR22594">
    <property type="entry name" value="ASPARTYL/LYSYL-TRNA SYNTHETASE"/>
    <property type="match status" value="1"/>
</dbReference>
<dbReference type="Pfam" id="PF02938">
    <property type="entry name" value="GAD"/>
    <property type="match status" value="1"/>
</dbReference>
<dbReference type="Pfam" id="PF00152">
    <property type="entry name" value="tRNA-synt_2"/>
    <property type="match status" value="1"/>
</dbReference>
<dbReference type="Pfam" id="PF01336">
    <property type="entry name" value="tRNA_anti-codon"/>
    <property type="match status" value="1"/>
</dbReference>
<dbReference type="PRINTS" id="PR01042">
    <property type="entry name" value="TRNASYNTHASP"/>
</dbReference>
<dbReference type="SUPFAM" id="SSF55681">
    <property type="entry name" value="Class II aaRS and biotin synthetases"/>
    <property type="match status" value="1"/>
</dbReference>
<dbReference type="SUPFAM" id="SSF55261">
    <property type="entry name" value="GAD domain-like"/>
    <property type="match status" value="1"/>
</dbReference>
<dbReference type="SUPFAM" id="SSF50249">
    <property type="entry name" value="Nucleic acid-binding proteins"/>
    <property type="match status" value="1"/>
</dbReference>
<dbReference type="PROSITE" id="PS50862">
    <property type="entry name" value="AA_TRNA_LIGASE_II"/>
    <property type="match status" value="1"/>
</dbReference>
<keyword id="KW-0030">Aminoacyl-tRNA synthetase</keyword>
<keyword id="KW-0067">ATP-binding</keyword>
<keyword id="KW-0963">Cytoplasm</keyword>
<keyword id="KW-0436">Ligase</keyword>
<keyword id="KW-0547">Nucleotide-binding</keyword>
<keyword id="KW-0648">Protein biosynthesis</keyword>
<feature type="chain" id="PRO_1000006643" description="Aspartate--tRNA(Asp/Asn) ligase">
    <location>
        <begin position="1"/>
        <end position="595"/>
    </location>
</feature>
<feature type="region of interest" description="Aspartate" evidence="1">
    <location>
        <begin position="199"/>
        <end position="202"/>
    </location>
</feature>
<feature type="binding site" evidence="1">
    <location>
        <position position="175"/>
    </location>
    <ligand>
        <name>L-aspartate</name>
        <dbReference type="ChEBI" id="CHEBI:29991"/>
    </ligand>
</feature>
<feature type="binding site" evidence="1">
    <location>
        <begin position="221"/>
        <end position="223"/>
    </location>
    <ligand>
        <name>ATP</name>
        <dbReference type="ChEBI" id="CHEBI:30616"/>
    </ligand>
</feature>
<feature type="binding site" evidence="1">
    <location>
        <position position="221"/>
    </location>
    <ligand>
        <name>L-aspartate</name>
        <dbReference type="ChEBI" id="CHEBI:29991"/>
    </ligand>
</feature>
<feature type="binding site" evidence="1">
    <location>
        <position position="454"/>
    </location>
    <ligand>
        <name>L-aspartate</name>
        <dbReference type="ChEBI" id="CHEBI:29991"/>
    </ligand>
</feature>
<feature type="binding site" evidence="1">
    <location>
        <position position="488"/>
    </location>
    <ligand>
        <name>ATP</name>
        <dbReference type="ChEBI" id="CHEBI:30616"/>
    </ligand>
</feature>
<feature type="binding site" evidence="1">
    <location>
        <position position="495"/>
    </location>
    <ligand>
        <name>L-aspartate</name>
        <dbReference type="ChEBI" id="CHEBI:29991"/>
    </ligand>
</feature>
<feature type="binding site" evidence="1">
    <location>
        <begin position="540"/>
        <end position="543"/>
    </location>
    <ligand>
        <name>ATP</name>
        <dbReference type="ChEBI" id="CHEBI:30616"/>
    </ligand>
</feature>
<feature type="site" description="Important for tRNA non-discrimination" evidence="1">
    <location>
        <position position="33"/>
    </location>
</feature>
<organism>
    <name type="scientific">Brucella ovis (strain ATCC 25840 / 63/290 / NCTC 10512)</name>
    <dbReference type="NCBI Taxonomy" id="444178"/>
    <lineage>
        <taxon>Bacteria</taxon>
        <taxon>Pseudomonadati</taxon>
        <taxon>Pseudomonadota</taxon>
        <taxon>Alphaproteobacteria</taxon>
        <taxon>Hyphomicrobiales</taxon>
        <taxon>Brucellaceae</taxon>
        <taxon>Brucella/Ochrobactrum group</taxon>
        <taxon>Brucella</taxon>
    </lineage>
</organism>